<name>PURA_SYNY3</name>
<organism>
    <name type="scientific">Synechocystis sp. (strain ATCC 27184 / PCC 6803 / Kazusa)</name>
    <dbReference type="NCBI Taxonomy" id="1111708"/>
    <lineage>
        <taxon>Bacteria</taxon>
        <taxon>Bacillati</taxon>
        <taxon>Cyanobacteriota</taxon>
        <taxon>Cyanophyceae</taxon>
        <taxon>Synechococcales</taxon>
        <taxon>Merismopediaceae</taxon>
        <taxon>Synechocystis</taxon>
    </lineage>
</organism>
<gene>
    <name evidence="1" type="primary">purA</name>
    <name type="ordered locus">sll1823</name>
</gene>
<comment type="function">
    <text evidence="1">Plays an important role in the de novo pathway of purine nucleotide biosynthesis. Catalyzes the first committed step in the biosynthesis of AMP from IMP.</text>
</comment>
<comment type="catalytic activity">
    <reaction evidence="1">
        <text>IMP + L-aspartate + GTP = N(6)-(1,2-dicarboxyethyl)-AMP + GDP + phosphate + 2 H(+)</text>
        <dbReference type="Rhea" id="RHEA:15753"/>
        <dbReference type="ChEBI" id="CHEBI:15378"/>
        <dbReference type="ChEBI" id="CHEBI:29991"/>
        <dbReference type="ChEBI" id="CHEBI:37565"/>
        <dbReference type="ChEBI" id="CHEBI:43474"/>
        <dbReference type="ChEBI" id="CHEBI:57567"/>
        <dbReference type="ChEBI" id="CHEBI:58053"/>
        <dbReference type="ChEBI" id="CHEBI:58189"/>
        <dbReference type="EC" id="6.3.4.4"/>
    </reaction>
</comment>
<comment type="cofactor">
    <cofactor evidence="1">
        <name>Mg(2+)</name>
        <dbReference type="ChEBI" id="CHEBI:18420"/>
    </cofactor>
    <text evidence="1">Binds 1 Mg(2+) ion per subunit.</text>
</comment>
<comment type="pathway">
    <text evidence="1">Purine metabolism; AMP biosynthesis via de novo pathway; AMP from IMP: step 1/2.</text>
</comment>
<comment type="subunit">
    <text evidence="1">Homodimer.</text>
</comment>
<comment type="subcellular location">
    <subcellularLocation>
        <location evidence="1">Cytoplasm</location>
    </subcellularLocation>
</comment>
<comment type="similarity">
    <text evidence="1">Belongs to the adenylosuccinate synthetase family.</text>
</comment>
<comment type="sequence caution" evidence="2">
    <conflict type="erroneous initiation">
        <sequence resource="EMBL-CDS" id="BAA17318"/>
    </conflict>
</comment>
<dbReference type="EC" id="6.3.4.4" evidence="1"/>
<dbReference type="EMBL" id="BA000022">
    <property type="protein sequence ID" value="BAA17318.1"/>
    <property type="status" value="ALT_INIT"/>
    <property type="molecule type" value="Genomic_DNA"/>
</dbReference>
<dbReference type="PIR" id="S77471">
    <property type="entry name" value="S77471"/>
</dbReference>
<dbReference type="SMR" id="P73290"/>
<dbReference type="FunCoup" id="P73290">
    <property type="interactions" value="487"/>
</dbReference>
<dbReference type="STRING" id="1148.gene:10498181"/>
<dbReference type="PaxDb" id="1148-1652396"/>
<dbReference type="EnsemblBacteria" id="BAA17318">
    <property type="protein sequence ID" value="BAA17318"/>
    <property type="gene ID" value="BAA17318"/>
</dbReference>
<dbReference type="KEGG" id="syn:sll1823"/>
<dbReference type="eggNOG" id="COG0104">
    <property type="taxonomic scope" value="Bacteria"/>
</dbReference>
<dbReference type="InParanoid" id="P73290"/>
<dbReference type="PhylomeDB" id="P73290"/>
<dbReference type="UniPathway" id="UPA00075">
    <property type="reaction ID" value="UER00335"/>
</dbReference>
<dbReference type="Proteomes" id="UP000001425">
    <property type="component" value="Chromosome"/>
</dbReference>
<dbReference type="GO" id="GO:0005737">
    <property type="term" value="C:cytoplasm"/>
    <property type="evidence" value="ECO:0000318"/>
    <property type="project" value="GO_Central"/>
</dbReference>
<dbReference type="GO" id="GO:0004019">
    <property type="term" value="F:adenylosuccinate synthase activity"/>
    <property type="evidence" value="ECO:0000318"/>
    <property type="project" value="GO_Central"/>
</dbReference>
<dbReference type="GO" id="GO:0005525">
    <property type="term" value="F:GTP binding"/>
    <property type="evidence" value="ECO:0007669"/>
    <property type="project" value="UniProtKB-UniRule"/>
</dbReference>
<dbReference type="GO" id="GO:0000287">
    <property type="term" value="F:magnesium ion binding"/>
    <property type="evidence" value="ECO:0007669"/>
    <property type="project" value="UniProtKB-UniRule"/>
</dbReference>
<dbReference type="GO" id="GO:0044208">
    <property type="term" value="P:'de novo' AMP biosynthetic process"/>
    <property type="evidence" value="ECO:0000318"/>
    <property type="project" value="GO_Central"/>
</dbReference>
<dbReference type="GO" id="GO:0046040">
    <property type="term" value="P:IMP metabolic process"/>
    <property type="evidence" value="ECO:0000318"/>
    <property type="project" value="GO_Central"/>
</dbReference>
<dbReference type="CDD" id="cd03108">
    <property type="entry name" value="AdSS"/>
    <property type="match status" value="1"/>
</dbReference>
<dbReference type="FunFam" id="1.10.300.10:FF:000001">
    <property type="entry name" value="Adenylosuccinate synthetase"/>
    <property type="match status" value="1"/>
</dbReference>
<dbReference type="FunFam" id="3.90.170.10:FF:000001">
    <property type="entry name" value="Adenylosuccinate synthetase"/>
    <property type="match status" value="1"/>
</dbReference>
<dbReference type="Gene3D" id="3.40.440.10">
    <property type="entry name" value="Adenylosuccinate Synthetase, subunit A, domain 1"/>
    <property type="match status" value="1"/>
</dbReference>
<dbReference type="Gene3D" id="1.10.300.10">
    <property type="entry name" value="Adenylosuccinate Synthetase, subunit A, domain 2"/>
    <property type="match status" value="1"/>
</dbReference>
<dbReference type="Gene3D" id="3.90.170.10">
    <property type="entry name" value="Adenylosuccinate Synthetase, subunit A, domain 3"/>
    <property type="match status" value="1"/>
</dbReference>
<dbReference type="HAMAP" id="MF_00011">
    <property type="entry name" value="Adenylosucc_synth"/>
    <property type="match status" value="1"/>
</dbReference>
<dbReference type="InterPro" id="IPR018220">
    <property type="entry name" value="Adenylosuccin_syn_GTP-bd"/>
</dbReference>
<dbReference type="InterPro" id="IPR033128">
    <property type="entry name" value="Adenylosuccin_syn_Lys_AS"/>
</dbReference>
<dbReference type="InterPro" id="IPR042109">
    <property type="entry name" value="Adenylosuccinate_synth_dom1"/>
</dbReference>
<dbReference type="InterPro" id="IPR042110">
    <property type="entry name" value="Adenylosuccinate_synth_dom2"/>
</dbReference>
<dbReference type="InterPro" id="IPR042111">
    <property type="entry name" value="Adenylosuccinate_synth_dom3"/>
</dbReference>
<dbReference type="InterPro" id="IPR001114">
    <property type="entry name" value="Adenylosuccinate_synthetase"/>
</dbReference>
<dbReference type="InterPro" id="IPR027417">
    <property type="entry name" value="P-loop_NTPase"/>
</dbReference>
<dbReference type="NCBIfam" id="NF002223">
    <property type="entry name" value="PRK01117.1"/>
    <property type="match status" value="1"/>
</dbReference>
<dbReference type="NCBIfam" id="TIGR00184">
    <property type="entry name" value="purA"/>
    <property type="match status" value="1"/>
</dbReference>
<dbReference type="PANTHER" id="PTHR11846">
    <property type="entry name" value="ADENYLOSUCCINATE SYNTHETASE"/>
    <property type="match status" value="1"/>
</dbReference>
<dbReference type="PANTHER" id="PTHR11846:SF0">
    <property type="entry name" value="ADENYLOSUCCINATE SYNTHETASE"/>
    <property type="match status" value="1"/>
</dbReference>
<dbReference type="Pfam" id="PF00709">
    <property type="entry name" value="Adenylsucc_synt"/>
    <property type="match status" value="1"/>
</dbReference>
<dbReference type="SMART" id="SM00788">
    <property type="entry name" value="Adenylsucc_synt"/>
    <property type="match status" value="1"/>
</dbReference>
<dbReference type="SUPFAM" id="SSF52540">
    <property type="entry name" value="P-loop containing nucleoside triphosphate hydrolases"/>
    <property type="match status" value="1"/>
</dbReference>
<dbReference type="PROSITE" id="PS01266">
    <property type="entry name" value="ADENYLOSUCCIN_SYN_1"/>
    <property type="match status" value="1"/>
</dbReference>
<dbReference type="PROSITE" id="PS00513">
    <property type="entry name" value="ADENYLOSUCCIN_SYN_2"/>
    <property type="match status" value="1"/>
</dbReference>
<evidence type="ECO:0000255" key="1">
    <source>
        <dbReference type="HAMAP-Rule" id="MF_00011"/>
    </source>
</evidence>
<evidence type="ECO:0000305" key="2"/>
<sequence>MLANVIVIGAQWGDEGKGKITDLLSRSADVVVRPQGGVNAGHTIVVNDQTFKLHLIPSGILYPDTECIIGSGTVIDPKVLLQEFDQLEALDVSLDRLYISQTAHVTMPFHRLLDQASEEKRGEHKIGTTGRGIGPTYADKSERMGIRVVDLMNPEILRKKLLWTVEYKNVVLDKLYDLPPLDPETVIAEYTTYADRLRPHVVDSSLKIYDAIHQRKNILFEGAQGTLLDLDHGTYPYVTSSNPIAGGACVGAGIGPTMIDRVIGVAKAYTTRVGEGPFPTELDGELNQHLCDRGAEFGTTTGRRRRCGWFDGVIGRYAVRINGLDCLAITKLDVLDQLAEIKVCVAYELDGKTCDHFPGNAAEFARCQPIYKTLPGWQCSTEECRTLEDLPPQALDYLKFLAELMEVPIAIVSLGASRDQTIIVEDPIHGPKRALLYANGDPLA</sequence>
<reference key="1">
    <citation type="journal article" date="1996" name="DNA Res.">
        <title>Sequence analysis of the genome of the unicellular cyanobacterium Synechocystis sp. strain PCC6803. II. Sequence determination of the entire genome and assignment of potential protein-coding regions.</title>
        <authorList>
            <person name="Kaneko T."/>
            <person name="Sato S."/>
            <person name="Kotani H."/>
            <person name="Tanaka A."/>
            <person name="Asamizu E."/>
            <person name="Nakamura Y."/>
            <person name="Miyajima N."/>
            <person name="Hirosawa M."/>
            <person name="Sugiura M."/>
            <person name="Sasamoto S."/>
            <person name="Kimura T."/>
            <person name="Hosouchi T."/>
            <person name="Matsuno A."/>
            <person name="Muraki A."/>
            <person name="Nakazaki N."/>
            <person name="Naruo K."/>
            <person name="Okumura S."/>
            <person name="Shimpo S."/>
            <person name="Takeuchi C."/>
            <person name="Wada T."/>
            <person name="Watanabe A."/>
            <person name="Yamada M."/>
            <person name="Yasuda M."/>
            <person name="Tabata S."/>
        </authorList>
    </citation>
    <scope>NUCLEOTIDE SEQUENCE [LARGE SCALE GENOMIC DNA]</scope>
    <source>
        <strain>ATCC 27184 / PCC 6803 / Kazusa</strain>
    </source>
</reference>
<feature type="chain" id="PRO_0000095247" description="Adenylosuccinate synthetase">
    <location>
        <begin position="1"/>
        <end position="444"/>
    </location>
</feature>
<feature type="active site" description="Proton acceptor" evidence="1">
    <location>
        <position position="14"/>
    </location>
</feature>
<feature type="active site" description="Proton donor" evidence="1">
    <location>
        <position position="42"/>
    </location>
</feature>
<feature type="binding site" evidence="1">
    <location>
        <begin position="13"/>
        <end position="19"/>
    </location>
    <ligand>
        <name>GTP</name>
        <dbReference type="ChEBI" id="CHEBI:37565"/>
    </ligand>
</feature>
<feature type="binding site" description="in other chain" evidence="1">
    <location>
        <begin position="14"/>
        <end position="17"/>
    </location>
    <ligand>
        <name>IMP</name>
        <dbReference type="ChEBI" id="CHEBI:58053"/>
        <note>ligand shared between dimeric partners</note>
    </ligand>
</feature>
<feature type="binding site" evidence="1">
    <location>
        <position position="14"/>
    </location>
    <ligand>
        <name>Mg(2+)</name>
        <dbReference type="ChEBI" id="CHEBI:18420"/>
    </ligand>
</feature>
<feature type="binding site" description="in other chain" evidence="1">
    <location>
        <begin position="39"/>
        <end position="42"/>
    </location>
    <ligand>
        <name>IMP</name>
        <dbReference type="ChEBI" id="CHEBI:58053"/>
        <note>ligand shared between dimeric partners</note>
    </ligand>
</feature>
<feature type="binding site" evidence="1">
    <location>
        <begin position="41"/>
        <end position="43"/>
    </location>
    <ligand>
        <name>GTP</name>
        <dbReference type="ChEBI" id="CHEBI:37565"/>
    </ligand>
</feature>
<feature type="binding site" evidence="1">
    <location>
        <position position="41"/>
    </location>
    <ligand>
        <name>Mg(2+)</name>
        <dbReference type="ChEBI" id="CHEBI:18420"/>
    </ligand>
</feature>
<feature type="binding site" description="in other chain" evidence="1">
    <location>
        <position position="129"/>
    </location>
    <ligand>
        <name>IMP</name>
        <dbReference type="ChEBI" id="CHEBI:58053"/>
        <note>ligand shared between dimeric partners</note>
    </ligand>
</feature>
<feature type="binding site" evidence="1">
    <location>
        <position position="143"/>
    </location>
    <ligand>
        <name>IMP</name>
        <dbReference type="ChEBI" id="CHEBI:58053"/>
        <note>ligand shared between dimeric partners</note>
    </ligand>
</feature>
<feature type="binding site" description="in other chain" evidence="1">
    <location>
        <position position="224"/>
    </location>
    <ligand>
        <name>IMP</name>
        <dbReference type="ChEBI" id="CHEBI:58053"/>
        <note>ligand shared between dimeric partners</note>
    </ligand>
</feature>
<feature type="binding site" description="in other chain" evidence="1">
    <location>
        <position position="239"/>
    </location>
    <ligand>
        <name>IMP</name>
        <dbReference type="ChEBI" id="CHEBI:58053"/>
        <note>ligand shared between dimeric partners</note>
    </ligand>
</feature>
<feature type="binding site" evidence="1">
    <location>
        <begin position="299"/>
        <end position="305"/>
    </location>
    <ligand>
        <name>substrate</name>
    </ligand>
</feature>
<feature type="binding site" description="in other chain" evidence="1">
    <location>
        <position position="303"/>
    </location>
    <ligand>
        <name>IMP</name>
        <dbReference type="ChEBI" id="CHEBI:58053"/>
        <note>ligand shared between dimeric partners</note>
    </ligand>
</feature>
<feature type="binding site" evidence="1">
    <location>
        <position position="305"/>
    </location>
    <ligand>
        <name>GTP</name>
        <dbReference type="ChEBI" id="CHEBI:37565"/>
    </ligand>
</feature>
<feature type="binding site" evidence="1">
    <location>
        <begin position="331"/>
        <end position="333"/>
    </location>
    <ligand>
        <name>GTP</name>
        <dbReference type="ChEBI" id="CHEBI:37565"/>
    </ligand>
</feature>
<feature type="binding site" evidence="1">
    <location>
        <begin position="413"/>
        <end position="415"/>
    </location>
    <ligand>
        <name>GTP</name>
        <dbReference type="ChEBI" id="CHEBI:37565"/>
    </ligand>
</feature>
<keyword id="KW-0963">Cytoplasm</keyword>
<keyword id="KW-0342">GTP-binding</keyword>
<keyword id="KW-0436">Ligase</keyword>
<keyword id="KW-0460">Magnesium</keyword>
<keyword id="KW-0479">Metal-binding</keyword>
<keyword id="KW-0547">Nucleotide-binding</keyword>
<keyword id="KW-0658">Purine biosynthesis</keyword>
<keyword id="KW-1185">Reference proteome</keyword>
<accession>P73290</accession>
<proteinExistence type="inferred from homology"/>
<protein>
    <recommendedName>
        <fullName evidence="1">Adenylosuccinate synthetase</fullName>
        <shortName evidence="1">AMPSase</shortName>
        <shortName evidence="1">AdSS</shortName>
        <ecNumber evidence="1">6.3.4.4</ecNumber>
    </recommendedName>
    <alternativeName>
        <fullName evidence="1">IMP--aspartate ligase</fullName>
    </alternativeName>
</protein>